<feature type="chain" id="PRO_0000109560" description="HTH-type transcriptional regulator IscR">
    <location>
        <begin position="1"/>
        <end position="162"/>
    </location>
</feature>
<feature type="domain" description="HTH rrf2-type">
    <location>
        <begin position="2"/>
        <end position="131"/>
    </location>
</feature>
<feature type="DNA-binding region" description="H-T-H motif" evidence="1">
    <location>
        <begin position="28"/>
        <end position="51"/>
    </location>
</feature>
<feature type="region of interest" description="Disordered" evidence="3">
    <location>
        <begin position="140"/>
        <end position="162"/>
    </location>
</feature>
<feature type="compositionally biased region" description="Basic and acidic residues" evidence="3">
    <location>
        <begin position="143"/>
        <end position="162"/>
    </location>
</feature>
<feature type="binding site" evidence="2">
    <location>
        <position position="92"/>
    </location>
    <ligand>
        <name>[2Fe-2S] cluster</name>
        <dbReference type="ChEBI" id="CHEBI:190135"/>
    </ligand>
</feature>
<feature type="binding site" evidence="2">
    <location>
        <position position="98"/>
    </location>
    <ligand>
        <name>[2Fe-2S] cluster</name>
        <dbReference type="ChEBI" id="CHEBI:190135"/>
    </ligand>
</feature>
<feature type="binding site" evidence="2">
    <location>
        <position position="104"/>
    </location>
    <ligand>
        <name>[2Fe-2S] cluster</name>
        <dbReference type="ChEBI" id="CHEBI:190135"/>
    </ligand>
</feature>
<feature type="mutagenesis site" description="No effect on activation of the suf operon, no effect on repression of rnlA." evidence="6 7">
    <original>C</original>
    <variation>A</variation>
    <location>
        <position position="92"/>
    </location>
</feature>
<feature type="mutagenesis site" description="No effect on activation of the suf operon, no effect on repression of rnlA." evidence="6 7">
    <original>C</original>
    <variation>A</variation>
    <location>
        <position position="98"/>
    </location>
</feature>
<feature type="mutagenesis site" description="No effect on activation of the suf operon, no effect on repression of rnlA." evidence="6 7">
    <original>C</original>
    <variation>A</variation>
    <location>
        <position position="104"/>
    </location>
</feature>
<feature type="helix" evidence="8">
    <location>
        <begin position="5"/>
        <end position="20"/>
    </location>
</feature>
<feature type="helix" evidence="8">
    <location>
        <begin position="21"/>
        <end position="23"/>
    </location>
</feature>
<feature type="helix" evidence="8">
    <location>
        <begin position="28"/>
        <end position="35"/>
    </location>
</feature>
<feature type="helix" evidence="8">
    <location>
        <begin position="39"/>
        <end position="51"/>
    </location>
</feature>
<feature type="strand" evidence="8">
    <location>
        <begin position="54"/>
        <end position="58"/>
    </location>
</feature>
<feature type="strand" evidence="10">
    <location>
        <begin position="60"/>
        <end position="62"/>
    </location>
</feature>
<feature type="strand" evidence="8">
    <location>
        <begin position="64"/>
        <end position="69"/>
    </location>
</feature>
<feature type="helix" evidence="8">
    <location>
        <begin position="71"/>
        <end position="73"/>
    </location>
</feature>
<feature type="helix" evidence="8">
    <location>
        <begin position="76"/>
        <end position="83"/>
    </location>
</feature>
<feature type="helix" evidence="9">
    <location>
        <begin position="97"/>
        <end position="99"/>
    </location>
</feature>
<feature type="helix" evidence="8">
    <location>
        <begin position="101"/>
        <end position="121"/>
    </location>
</feature>
<feature type="helix" evidence="8">
    <location>
        <begin position="126"/>
        <end position="132"/>
    </location>
</feature>
<sequence length="162" mass="17337">MRLTSKGRYAVTAMLDVALNSEAGPVPLADISERQGISLSYLEQLFSRLRKNGLVSSVRGPGGGYLLGKDASSIAVGEVISAVDESVDATRCQGKGGCQGGDKCLTHALWRDLSDRLTGFLNNITLGELVNNQEVLDVSGRQHTHDAPRTRTQDAIDVKLRA</sequence>
<protein>
    <recommendedName>
        <fullName>HTH-type transcriptional regulator IscR</fullName>
    </recommendedName>
</protein>
<comment type="function">
    <text evidence="4 6 7">Regulates the transcription of several operons and genes involved in the biogenesis of Fe-S clusters and Fe-S-containing proteins. Transcriptional repressor of the iscRSUA operon, which is involved in the assembly of Fe-S clusters into Fe-S proteins. In its apoform, under conditions of oxidative stress or iron deprivation, it activates the suf operon, which is a second operon involved in the assembly of Fe-S clusters. Represses its own transcription as well as that of toxin rnlA.</text>
</comment>
<comment type="cofactor">
    <cofactor evidence="4 5">
        <name>[2Fe-2S] cluster</name>
        <dbReference type="ChEBI" id="CHEBI:190135"/>
    </cofactor>
    <text evidence="4 5">Binds 1 [2Fe-2S] cluster; whether or not the Fe-S cluster is necessary for transcriptional regulation depends on the type of IscR-binding sequence.</text>
</comment>
<comment type="interaction">
    <interactant intactId="EBI-1129278">
        <id>P0AGK8</id>
    </interactant>
    <interactant intactId="EBI-1129278">
        <id>P0AGK8</id>
        <label>iscR</label>
    </interactant>
    <organismsDiffer>false</organismsDiffer>
    <experiments>2</experiments>
</comment>
<comment type="induction">
    <text evidence="5">By oxidative stress conditions and iron starvation.</text>
</comment>
<gene>
    <name type="primary">iscR</name>
    <name type="synonym">yfhP</name>
    <name type="ordered locus">b2531</name>
    <name type="ordered locus">JW2515</name>
</gene>
<proteinExistence type="evidence at protein level"/>
<reference key="1">
    <citation type="journal article" date="1997" name="DNA Res.">
        <title>Construction of a contiguous 874-kb sequence of the Escherichia coli-K12 genome corresponding to 50.0-68.8 min on the linkage map and analysis of its sequence features.</title>
        <authorList>
            <person name="Yamamoto Y."/>
            <person name="Aiba H."/>
            <person name="Baba T."/>
            <person name="Hayashi K."/>
            <person name="Inada T."/>
            <person name="Isono K."/>
            <person name="Itoh T."/>
            <person name="Kimura S."/>
            <person name="Kitagawa M."/>
            <person name="Makino K."/>
            <person name="Miki T."/>
            <person name="Mitsuhashi N."/>
            <person name="Mizobuchi K."/>
            <person name="Mori H."/>
            <person name="Nakade S."/>
            <person name="Nakamura Y."/>
            <person name="Nashimoto H."/>
            <person name="Oshima T."/>
            <person name="Oyama S."/>
            <person name="Saito N."/>
            <person name="Sampei G."/>
            <person name="Satoh Y."/>
            <person name="Sivasundaram S."/>
            <person name="Tagami H."/>
            <person name="Takahashi H."/>
            <person name="Takeda J."/>
            <person name="Takemoto K."/>
            <person name="Uehara K."/>
            <person name="Wada C."/>
            <person name="Yamagata S."/>
            <person name="Horiuchi T."/>
        </authorList>
    </citation>
    <scope>NUCLEOTIDE SEQUENCE [LARGE SCALE GENOMIC DNA]</scope>
    <source>
        <strain>K12 / W3110 / ATCC 27325 / DSM 5911</strain>
    </source>
</reference>
<reference key="2">
    <citation type="journal article" date="1997" name="Science">
        <title>The complete genome sequence of Escherichia coli K-12.</title>
        <authorList>
            <person name="Blattner F.R."/>
            <person name="Plunkett G. III"/>
            <person name="Bloch C.A."/>
            <person name="Perna N.T."/>
            <person name="Burland V."/>
            <person name="Riley M."/>
            <person name="Collado-Vides J."/>
            <person name="Glasner J.D."/>
            <person name="Rode C.K."/>
            <person name="Mayhew G.F."/>
            <person name="Gregor J."/>
            <person name="Davis N.W."/>
            <person name="Kirkpatrick H.A."/>
            <person name="Goeden M.A."/>
            <person name="Rose D.J."/>
            <person name="Mau B."/>
            <person name="Shao Y."/>
        </authorList>
    </citation>
    <scope>NUCLEOTIDE SEQUENCE [LARGE SCALE GENOMIC DNA]</scope>
    <source>
        <strain>K12 / MG1655 / ATCC 47076</strain>
    </source>
</reference>
<reference key="3">
    <citation type="journal article" date="2006" name="Mol. Syst. Biol.">
        <title>Highly accurate genome sequences of Escherichia coli K-12 strains MG1655 and W3110.</title>
        <authorList>
            <person name="Hayashi K."/>
            <person name="Morooka N."/>
            <person name="Yamamoto Y."/>
            <person name="Fujita K."/>
            <person name="Isono K."/>
            <person name="Choi S."/>
            <person name="Ohtsubo E."/>
            <person name="Baba T."/>
            <person name="Wanner B.L."/>
            <person name="Mori H."/>
            <person name="Horiuchi T."/>
        </authorList>
    </citation>
    <scope>NUCLEOTIDE SEQUENCE [LARGE SCALE GENOMIC DNA]</scope>
    <source>
        <strain>K12 / W3110 / ATCC 27325 / DSM 5911</strain>
    </source>
</reference>
<reference key="4">
    <citation type="journal article" date="2001" name="Proc. Natl. Acad. Sci. U.S.A.">
        <title>IscR, an Fe-S cluster-containing transcription factor, represses expression of Escherichia coli genes encoding Fe-S cluster assembly proteins.</title>
        <authorList>
            <person name="Schwartz C.J."/>
            <person name="Giel J.L."/>
            <person name="Patschkowski T."/>
            <person name="Luther C."/>
            <person name="Ruzicka F.J."/>
            <person name="Beinert H."/>
            <person name="Kiley P.J."/>
        </authorList>
    </citation>
    <scope>FUNCTION</scope>
    <scope>COFACTOR</scope>
    <source>
        <strain>K12 / MG1655 / ATCC 47076</strain>
    </source>
</reference>
<reference key="5">
    <citation type="journal article" date="2006" name="Mol. Microbiol.">
        <title>IscR-dependent gene expression links iron-sulphur cluster assembly to the control of O2-regulated genes in Escherichia coli.</title>
        <authorList>
            <person name="Giel J.L."/>
            <person name="Rodionov D."/>
            <person name="Liu M."/>
            <person name="Blattner F.R."/>
            <person name="Kiley P.J."/>
        </authorList>
    </citation>
    <scope>REGULATION OF BIOGENESIS OF FE-S-CONTAINING CLUSTERS AND PROTEINS</scope>
    <scope>INDUCTION</scope>
    <source>
        <strain>K12 / MG1655 / ATCC 47076</strain>
    </source>
</reference>
<reference key="6">
    <citation type="journal article" date="2006" name="Mol. Microbiol.">
        <title>IscR acts as an activator in response to oxidative stress for the suf operon encoding Fe-S assembly proteins.</title>
        <authorList>
            <person name="Yeo W.-S."/>
            <person name="Lee J.-H."/>
            <person name="Lee K.-C."/>
            <person name="Roe J.-H."/>
        </authorList>
    </citation>
    <scope>FUNCTION IN ACTIVATION OF SUF OPERON</scope>
    <scope>MUTAGENESIS OF CYS-92; CYS-98 AND CYS-104</scope>
    <source>
        <strain>K12 / GC4468</strain>
    </source>
</reference>
<reference key="7">
    <citation type="journal article" date="2010" name="Genetics">
        <title>IscR regulates RNase LS activity by repressing rnlA transcription.</title>
        <authorList>
            <person name="Otsuka Y."/>
            <person name="Miki K."/>
            <person name="Koga M."/>
            <person name="Katayama N."/>
            <person name="Morimoto W."/>
            <person name="Takahashi Y."/>
            <person name="Yonesaki T."/>
        </authorList>
    </citation>
    <scope>FUNCTION IN REPRESSION OF RNLA</scope>
    <scope>DNA-BINDING</scope>
    <scope>MUTAGENESIS OF CYS-92; CYS-98 AND CYS-104</scope>
    <source>
        <strain>K12</strain>
    </source>
</reference>
<evidence type="ECO:0000250" key="1"/>
<evidence type="ECO:0000255" key="2"/>
<evidence type="ECO:0000256" key="3">
    <source>
        <dbReference type="SAM" id="MobiDB-lite"/>
    </source>
</evidence>
<evidence type="ECO:0000269" key="4">
    <source>
    </source>
</evidence>
<evidence type="ECO:0000269" key="5">
    <source>
    </source>
</evidence>
<evidence type="ECO:0000269" key="6">
    <source>
    </source>
</evidence>
<evidence type="ECO:0000269" key="7">
    <source>
    </source>
</evidence>
<evidence type="ECO:0007829" key="8">
    <source>
        <dbReference type="PDB" id="4HF0"/>
    </source>
</evidence>
<evidence type="ECO:0007829" key="9">
    <source>
        <dbReference type="PDB" id="4HF1"/>
    </source>
</evidence>
<evidence type="ECO:0007829" key="10">
    <source>
        <dbReference type="PDB" id="4HF2"/>
    </source>
</evidence>
<accession>P0AGK8</accession>
<accession>P77484</accession>
<dbReference type="EMBL" id="U00096">
    <property type="protein sequence ID" value="AAC75584.1"/>
    <property type="molecule type" value="Genomic_DNA"/>
</dbReference>
<dbReference type="EMBL" id="AP009048">
    <property type="protein sequence ID" value="BAA16425.1"/>
    <property type="molecule type" value="Genomic_DNA"/>
</dbReference>
<dbReference type="PIR" id="B65030">
    <property type="entry name" value="B65030"/>
</dbReference>
<dbReference type="RefSeq" id="NP_417026.1">
    <property type="nucleotide sequence ID" value="NC_000913.3"/>
</dbReference>
<dbReference type="RefSeq" id="WP_001241357.1">
    <property type="nucleotide sequence ID" value="NZ_STEB01000011.1"/>
</dbReference>
<dbReference type="PDB" id="4HF0">
    <property type="method" value="X-ray"/>
    <property type="resolution" value="1.90 A"/>
    <property type="chains" value="A/B=1-133"/>
</dbReference>
<dbReference type="PDB" id="4HF1">
    <property type="method" value="X-ray"/>
    <property type="resolution" value="2.22 A"/>
    <property type="chains" value="A/B=1-162"/>
</dbReference>
<dbReference type="PDB" id="4HF2">
    <property type="method" value="X-ray"/>
    <property type="resolution" value="2.99 A"/>
    <property type="chains" value="A/B=1-162"/>
</dbReference>
<dbReference type="PDBsum" id="4HF0"/>
<dbReference type="PDBsum" id="4HF1"/>
<dbReference type="PDBsum" id="4HF2"/>
<dbReference type="SMR" id="P0AGK8"/>
<dbReference type="BioGRID" id="4259433">
    <property type="interactions" value="182"/>
</dbReference>
<dbReference type="BioGRID" id="849657">
    <property type="interactions" value="1"/>
</dbReference>
<dbReference type="DIP" id="DIP-47974N"/>
<dbReference type="FunCoup" id="P0AGK8">
    <property type="interactions" value="428"/>
</dbReference>
<dbReference type="IntAct" id="P0AGK8">
    <property type="interactions" value="4"/>
</dbReference>
<dbReference type="STRING" id="511145.b2531"/>
<dbReference type="jPOST" id="P0AGK8"/>
<dbReference type="PaxDb" id="511145-b2531"/>
<dbReference type="EnsemblBacteria" id="AAC75584">
    <property type="protein sequence ID" value="AAC75584"/>
    <property type="gene ID" value="b2531"/>
</dbReference>
<dbReference type="GeneID" id="86947421"/>
<dbReference type="GeneID" id="945279"/>
<dbReference type="KEGG" id="ecj:JW2515"/>
<dbReference type="KEGG" id="eco:b2531"/>
<dbReference type="KEGG" id="ecoc:C3026_14025"/>
<dbReference type="PATRIC" id="fig|1411691.4.peg.4203"/>
<dbReference type="EchoBASE" id="EB3178"/>
<dbReference type="eggNOG" id="COG1959">
    <property type="taxonomic scope" value="Bacteria"/>
</dbReference>
<dbReference type="HOGENOM" id="CLU_107144_0_0_6"/>
<dbReference type="InParanoid" id="P0AGK8"/>
<dbReference type="OMA" id="RCMTHDL"/>
<dbReference type="OrthoDB" id="9808360at2"/>
<dbReference type="PhylomeDB" id="P0AGK8"/>
<dbReference type="BioCyc" id="EcoCyc:G7326-MONOMER"/>
<dbReference type="EvolutionaryTrace" id="P0AGK8"/>
<dbReference type="PRO" id="PR:P0AGK8"/>
<dbReference type="Proteomes" id="UP000000625">
    <property type="component" value="Chromosome"/>
</dbReference>
<dbReference type="GO" id="GO:0005829">
    <property type="term" value="C:cytosol"/>
    <property type="evidence" value="ECO:0000314"/>
    <property type="project" value="EcoCyc"/>
</dbReference>
<dbReference type="GO" id="GO:0051537">
    <property type="term" value="F:2 iron, 2 sulfur cluster binding"/>
    <property type="evidence" value="ECO:0007669"/>
    <property type="project" value="UniProtKB-KW"/>
</dbReference>
<dbReference type="GO" id="GO:0003700">
    <property type="term" value="F:DNA-binding transcription factor activity"/>
    <property type="evidence" value="ECO:0000314"/>
    <property type="project" value="EcoCyc"/>
</dbReference>
<dbReference type="GO" id="GO:0003690">
    <property type="term" value="F:double-stranded DNA binding"/>
    <property type="evidence" value="ECO:0007669"/>
    <property type="project" value="UniProtKB-UniRule"/>
</dbReference>
<dbReference type="GO" id="GO:0042802">
    <property type="term" value="F:identical protein binding"/>
    <property type="evidence" value="ECO:0000353"/>
    <property type="project" value="IntAct"/>
</dbReference>
<dbReference type="GO" id="GO:0005506">
    <property type="term" value="F:iron ion binding"/>
    <property type="evidence" value="ECO:0007669"/>
    <property type="project" value="UniProtKB-UniRule"/>
</dbReference>
<dbReference type="GO" id="GO:0006355">
    <property type="term" value="P:regulation of DNA-templated transcription"/>
    <property type="evidence" value="ECO:0000314"/>
    <property type="project" value="EcoCyc"/>
</dbReference>
<dbReference type="FunFam" id="1.10.10.10:FF:000026">
    <property type="entry name" value="HTH-type transcriptional regulator IscR"/>
    <property type="match status" value="1"/>
</dbReference>
<dbReference type="Gene3D" id="1.10.10.10">
    <property type="entry name" value="Winged helix-like DNA-binding domain superfamily/Winged helix DNA-binding domain"/>
    <property type="match status" value="1"/>
</dbReference>
<dbReference type="HAMAP" id="MF_01176">
    <property type="entry name" value="HTH_type_IscR"/>
    <property type="match status" value="1"/>
</dbReference>
<dbReference type="InterPro" id="IPR010242">
    <property type="entry name" value="TF_HTH_IscR"/>
</dbReference>
<dbReference type="InterPro" id="IPR030489">
    <property type="entry name" value="TR_Rrf2-type_CS"/>
</dbReference>
<dbReference type="InterPro" id="IPR000944">
    <property type="entry name" value="Tscrpt_reg_Rrf2"/>
</dbReference>
<dbReference type="InterPro" id="IPR036388">
    <property type="entry name" value="WH-like_DNA-bd_sf"/>
</dbReference>
<dbReference type="InterPro" id="IPR036390">
    <property type="entry name" value="WH_DNA-bd_sf"/>
</dbReference>
<dbReference type="NCBIfam" id="TIGR02010">
    <property type="entry name" value="IscR"/>
    <property type="match status" value="1"/>
</dbReference>
<dbReference type="NCBIfam" id="NF008110">
    <property type="entry name" value="PRK10857.1"/>
    <property type="match status" value="1"/>
</dbReference>
<dbReference type="NCBIfam" id="TIGR00738">
    <property type="entry name" value="rrf2_super"/>
    <property type="match status" value="1"/>
</dbReference>
<dbReference type="PANTHER" id="PTHR33221:SF5">
    <property type="entry name" value="HTH-TYPE TRANSCRIPTIONAL REGULATOR ISCR"/>
    <property type="match status" value="1"/>
</dbReference>
<dbReference type="PANTHER" id="PTHR33221">
    <property type="entry name" value="WINGED HELIX-TURN-HELIX TRANSCRIPTIONAL REGULATOR, RRF2 FAMILY"/>
    <property type="match status" value="1"/>
</dbReference>
<dbReference type="Pfam" id="PF02082">
    <property type="entry name" value="Rrf2"/>
    <property type="match status" value="1"/>
</dbReference>
<dbReference type="SUPFAM" id="SSF46785">
    <property type="entry name" value="Winged helix' DNA-binding domain"/>
    <property type="match status" value="1"/>
</dbReference>
<dbReference type="PROSITE" id="PS01332">
    <property type="entry name" value="HTH_RRF2_1"/>
    <property type="match status" value="1"/>
</dbReference>
<dbReference type="PROSITE" id="PS51197">
    <property type="entry name" value="HTH_RRF2_2"/>
    <property type="match status" value="1"/>
</dbReference>
<keyword id="KW-0001">2Fe-2S</keyword>
<keyword id="KW-0002">3D-structure</keyword>
<keyword id="KW-0010">Activator</keyword>
<keyword id="KW-0238">DNA-binding</keyword>
<keyword id="KW-0408">Iron</keyword>
<keyword id="KW-0411">Iron-sulfur</keyword>
<keyword id="KW-0479">Metal-binding</keyword>
<keyword id="KW-1185">Reference proteome</keyword>
<keyword id="KW-0678">Repressor</keyword>
<keyword id="KW-0346">Stress response</keyword>
<keyword id="KW-0804">Transcription</keyword>
<keyword id="KW-0805">Transcription regulation</keyword>
<name>ISCR_ECOLI</name>
<organism>
    <name type="scientific">Escherichia coli (strain K12)</name>
    <dbReference type="NCBI Taxonomy" id="83333"/>
    <lineage>
        <taxon>Bacteria</taxon>
        <taxon>Pseudomonadati</taxon>
        <taxon>Pseudomonadota</taxon>
        <taxon>Gammaproteobacteria</taxon>
        <taxon>Enterobacterales</taxon>
        <taxon>Enterobacteriaceae</taxon>
        <taxon>Escherichia</taxon>
    </lineage>
</organism>